<organism>
    <name type="scientific">Saccharomyces cerevisiae (strain ATCC 204508 / S288c)</name>
    <name type="common">Baker's yeast</name>
    <dbReference type="NCBI Taxonomy" id="559292"/>
    <lineage>
        <taxon>Eukaryota</taxon>
        <taxon>Fungi</taxon>
        <taxon>Dikarya</taxon>
        <taxon>Ascomycota</taxon>
        <taxon>Saccharomycotina</taxon>
        <taxon>Saccharomycetes</taxon>
        <taxon>Saccharomycetales</taxon>
        <taxon>Saccharomycetaceae</taxon>
        <taxon>Saccharomyces</taxon>
    </lineage>
</organism>
<feature type="initiator methionine" description="Removed" evidence="4 7">
    <location>
        <position position="1"/>
    </location>
</feature>
<feature type="chain" id="PRO_0000203473" description="UPF0674 endoplasmic reticulum membrane protein YNR021W">
    <location>
        <begin position="2"/>
        <end position="404"/>
    </location>
</feature>
<feature type="transmembrane region" description="Helical" evidence="1">
    <location>
        <begin position="49"/>
        <end position="68"/>
    </location>
</feature>
<feature type="region of interest" description="Disordered" evidence="2">
    <location>
        <begin position="369"/>
        <end position="404"/>
    </location>
</feature>
<feature type="compositionally biased region" description="Basic and acidic residues" evidence="2">
    <location>
        <begin position="381"/>
        <end position="392"/>
    </location>
</feature>
<feature type="compositionally biased region" description="Basic residues" evidence="2">
    <location>
        <begin position="393"/>
        <end position="404"/>
    </location>
</feature>
<feature type="modified residue" description="N-acetylserine" evidence="4 7">
    <location>
        <position position="2"/>
    </location>
</feature>
<feature type="glycosylation site" description="N-linked (GlcNAc...) asparagine" evidence="1">
    <location>
        <position position="44"/>
    </location>
</feature>
<feature type="glycosylation site" description="N-linked (GlcNAc...) asparagine" evidence="1">
    <location>
        <position position="98"/>
    </location>
</feature>
<evidence type="ECO:0000255" key="1"/>
<evidence type="ECO:0000256" key="2">
    <source>
        <dbReference type="SAM" id="MobiDB-lite"/>
    </source>
</evidence>
<evidence type="ECO:0000269" key="3">
    <source>
    </source>
</evidence>
<evidence type="ECO:0000269" key="4">
    <source ref="3"/>
</evidence>
<evidence type="ECO:0000305" key="5"/>
<evidence type="ECO:0000305" key="6">
    <source>
    </source>
</evidence>
<evidence type="ECO:0007744" key="7">
    <source>
    </source>
</evidence>
<gene>
    <name type="ordered locus">YNR021W</name>
    <name type="ORF">N3216</name>
</gene>
<protein>
    <recommendedName>
        <fullName>UPF0674 endoplasmic reticulum membrane protein YNR021W</fullName>
    </recommendedName>
</protein>
<proteinExistence type="evidence at protein level"/>
<comment type="subcellular location">
    <subcellularLocation>
        <location evidence="6">Endoplasmic reticulum membrane</location>
        <topology evidence="6">Single-pass membrane protein</topology>
    </subcellularLocation>
</comment>
<comment type="miscellaneous">
    <text evidence="3">Present with 34906 molecules/cell in log phase SD medium.</text>
</comment>
<comment type="similarity">
    <text evidence="5">Belongs to the UPF0674 family.</text>
</comment>
<accession>P53723</accession>
<accession>D6W1J6</accession>
<keyword id="KW-0007">Acetylation</keyword>
<keyword id="KW-0903">Direct protein sequencing</keyword>
<keyword id="KW-0256">Endoplasmic reticulum</keyword>
<keyword id="KW-0325">Glycoprotein</keyword>
<keyword id="KW-0472">Membrane</keyword>
<keyword id="KW-1185">Reference proteome</keyword>
<keyword id="KW-0812">Transmembrane</keyword>
<keyword id="KW-1133">Transmembrane helix</keyword>
<sequence length="404" mass="47093">MSSSIFGPLTGFLERVNSLNAPYQALSYDEQKAMTIWQRVKFYNWTFELCALGVLFLVYAFYKFGNSVNLKRGNQIFQSLHSFLANDLKFSRVGFNINDSKIFTVEHQNTWFSSFATGRSAIKSINLNLHLVARSNPFSMCLEYLLGFFFASLKSKQLEEFMEIVIRPNGILVTSESAHPNKNAHEILTKFRFVTSIVNKEFMNQARTENYFLSIAHTSENDKLPNNFVYMSDVNQLSGFMFHYSKPYEVLSQAGNLLKYISFTDLPVNPPRDDKEWESSIEPKAIIRCAVPQNENELKLLNQIISLVVEIYDGFTQDLVQQSPNLFITNDILKRTTNLRQQELNKIKKFMKETELELAKEKKLELEKAKRRQLKASGQQEKVDQKMKEKRERRLKNKQRTRFQ</sequence>
<dbReference type="EMBL" id="Z71636">
    <property type="protein sequence ID" value="CAA96300.1"/>
    <property type="molecule type" value="Genomic_DNA"/>
</dbReference>
<dbReference type="EMBL" id="BK006947">
    <property type="protein sequence ID" value="DAA10562.1"/>
    <property type="molecule type" value="Genomic_DNA"/>
</dbReference>
<dbReference type="PIR" id="S63352">
    <property type="entry name" value="S63352"/>
</dbReference>
<dbReference type="RefSeq" id="NP_014418.3">
    <property type="nucleotide sequence ID" value="NM_001183198.3"/>
</dbReference>
<dbReference type="SMR" id="P53723"/>
<dbReference type="BioGRID" id="35846">
    <property type="interactions" value="109"/>
</dbReference>
<dbReference type="FunCoup" id="P53723">
    <property type="interactions" value="102"/>
</dbReference>
<dbReference type="IntAct" id="P53723">
    <property type="interactions" value="3"/>
</dbReference>
<dbReference type="MINT" id="P53723"/>
<dbReference type="STRING" id="4932.YNR021W"/>
<dbReference type="GlyGen" id="P53723">
    <property type="glycosylation" value="2 sites"/>
</dbReference>
<dbReference type="iPTMnet" id="P53723"/>
<dbReference type="PaxDb" id="4932-YNR021W"/>
<dbReference type="PeptideAtlas" id="P53723"/>
<dbReference type="EnsemblFungi" id="YNR021W_mRNA">
    <property type="protein sequence ID" value="YNR021W"/>
    <property type="gene ID" value="YNR021W"/>
</dbReference>
<dbReference type="GeneID" id="855755"/>
<dbReference type="KEGG" id="sce:YNR021W"/>
<dbReference type="AGR" id="SGD:S000005304"/>
<dbReference type="SGD" id="S000005304">
    <property type="gene designation" value="YNR021W"/>
</dbReference>
<dbReference type="VEuPathDB" id="FungiDB:YNR021W"/>
<dbReference type="eggNOG" id="KOG2357">
    <property type="taxonomic scope" value="Eukaryota"/>
</dbReference>
<dbReference type="GeneTree" id="ENSGT00390000013997"/>
<dbReference type="HOGENOM" id="CLU_672638_0_0_1"/>
<dbReference type="InParanoid" id="P53723"/>
<dbReference type="OMA" id="FDGFVWA"/>
<dbReference type="OrthoDB" id="10039147at2759"/>
<dbReference type="BioCyc" id="YEAST:G3O-33335-MONOMER"/>
<dbReference type="BioGRID-ORCS" id="855755">
    <property type="hits" value="3 hits in 10 CRISPR screens"/>
</dbReference>
<dbReference type="PRO" id="PR:P53723"/>
<dbReference type="Proteomes" id="UP000002311">
    <property type="component" value="Chromosome XIV"/>
</dbReference>
<dbReference type="RNAct" id="P53723">
    <property type="molecule type" value="protein"/>
</dbReference>
<dbReference type="GO" id="GO:0005783">
    <property type="term" value="C:endoplasmic reticulum"/>
    <property type="evidence" value="ECO:0007005"/>
    <property type="project" value="SGD"/>
</dbReference>
<dbReference type="GO" id="GO:0005789">
    <property type="term" value="C:endoplasmic reticulum membrane"/>
    <property type="evidence" value="ECO:0007669"/>
    <property type="project" value="UniProtKB-SubCell"/>
</dbReference>
<dbReference type="GO" id="GO:0005509">
    <property type="term" value="F:calcium ion binding"/>
    <property type="evidence" value="ECO:0000318"/>
    <property type="project" value="GO_Central"/>
</dbReference>
<dbReference type="GO" id="GO:0032469">
    <property type="term" value="P:endoplasmic reticulum calcium ion homeostasis"/>
    <property type="evidence" value="ECO:0007669"/>
    <property type="project" value="InterPro"/>
</dbReference>
<dbReference type="InterPro" id="IPR012879">
    <property type="entry name" value="CCDC47"/>
</dbReference>
<dbReference type="PANTHER" id="PTHR12883">
    <property type="entry name" value="ADIPOCYTE-SPECIFIC PROTEIN 4-RELATED"/>
    <property type="match status" value="1"/>
</dbReference>
<dbReference type="PANTHER" id="PTHR12883:SF0">
    <property type="entry name" value="PAT COMPLEX SUBUNIT CCDC47"/>
    <property type="match status" value="1"/>
</dbReference>
<dbReference type="Pfam" id="PF07946">
    <property type="entry name" value="CCDC47"/>
    <property type="match status" value="1"/>
</dbReference>
<name>YN8B_YEAST</name>
<reference key="1">
    <citation type="journal article" date="1997" name="Nature">
        <title>The nucleotide sequence of Saccharomyces cerevisiae chromosome XIV and its evolutionary implications.</title>
        <authorList>
            <person name="Philippsen P."/>
            <person name="Kleine K."/>
            <person name="Poehlmann R."/>
            <person name="Duesterhoeft A."/>
            <person name="Hamberg K."/>
            <person name="Hegemann J.H."/>
            <person name="Obermaier B."/>
            <person name="Urrestarazu L.A."/>
            <person name="Aert R."/>
            <person name="Albermann K."/>
            <person name="Altmann R."/>
            <person name="Andre B."/>
            <person name="Baladron V."/>
            <person name="Ballesta J.P.G."/>
            <person name="Becam A.-M."/>
            <person name="Beinhauer J.D."/>
            <person name="Boskovic J."/>
            <person name="Buitrago M.J."/>
            <person name="Bussereau F."/>
            <person name="Coster F."/>
            <person name="Crouzet M."/>
            <person name="D'Angelo M."/>
            <person name="Dal Pero F."/>
            <person name="De Antoni A."/>
            <person name="del Rey F."/>
            <person name="Doignon F."/>
            <person name="Domdey H."/>
            <person name="Dubois E."/>
            <person name="Fiedler T.A."/>
            <person name="Fleig U."/>
            <person name="Floeth M."/>
            <person name="Fritz C."/>
            <person name="Gaillardin C."/>
            <person name="Garcia-Cantalejo J.M."/>
            <person name="Glansdorff N."/>
            <person name="Goffeau A."/>
            <person name="Gueldener U."/>
            <person name="Herbert C.J."/>
            <person name="Heumann K."/>
            <person name="Heuss-Neitzel D."/>
            <person name="Hilbert H."/>
            <person name="Hinni K."/>
            <person name="Iraqui Houssaini I."/>
            <person name="Jacquet M."/>
            <person name="Jimenez A."/>
            <person name="Jonniaux J.-L."/>
            <person name="Karpfinger-Hartl L."/>
            <person name="Lanfranchi G."/>
            <person name="Lepingle A."/>
            <person name="Levesque H."/>
            <person name="Lyck R."/>
            <person name="Maftahi M."/>
            <person name="Mallet L."/>
            <person name="Maurer C.T.C."/>
            <person name="Messenguy F."/>
            <person name="Mewes H.-W."/>
            <person name="Moestl D."/>
            <person name="Nasr F."/>
            <person name="Nicaud J.-M."/>
            <person name="Niedenthal R.K."/>
            <person name="Pandolfo D."/>
            <person name="Pierard A."/>
            <person name="Piravandi E."/>
            <person name="Planta R.J."/>
            <person name="Pohl T.M."/>
            <person name="Purnelle B."/>
            <person name="Rebischung C."/>
            <person name="Remacha M.A."/>
            <person name="Revuelta J.L."/>
            <person name="Rinke M."/>
            <person name="Saiz J.E."/>
            <person name="Sartorello F."/>
            <person name="Scherens B."/>
            <person name="Sen-Gupta M."/>
            <person name="Soler-Mira A."/>
            <person name="Urbanus J.H.M."/>
            <person name="Valle G."/>
            <person name="Van Dyck L."/>
            <person name="Verhasselt P."/>
            <person name="Vierendeels F."/>
            <person name="Vissers S."/>
            <person name="Voet M."/>
            <person name="Volckaert G."/>
            <person name="Wach A."/>
            <person name="Wambutt R."/>
            <person name="Wedler H."/>
            <person name="Zollner A."/>
            <person name="Hani J."/>
        </authorList>
    </citation>
    <scope>NUCLEOTIDE SEQUENCE [LARGE SCALE GENOMIC DNA]</scope>
    <source>
        <strain>ATCC 204508 / S288c</strain>
    </source>
</reference>
<reference key="2">
    <citation type="journal article" date="2014" name="G3 (Bethesda)">
        <title>The reference genome sequence of Saccharomyces cerevisiae: Then and now.</title>
        <authorList>
            <person name="Engel S.R."/>
            <person name="Dietrich F.S."/>
            <person name="Fisk D.G."/>
            <person name="Binkley G."/>
            <person name="Balakrishnan R."/>
            <person name="Costanzo M.C."/>
            <person name="Dwight S.S."/>
            <person name="Hitz B.C."/>
            <person name="Karra K."/>
            <person name="Nash R.S."/>
            <person name="Weng S."/>
            <person name="Wong E.D."/>
            <person name="Lloyd P."/>
            <person name="Skrzypek M.S."/>
            <person name="Miyasato S.R."/>
            <person name="Simison M."/>
            <person name="Cherry J.M."/>
        </authorList>
    </citation>
    <scope>GENOME REANNOTATION</scope>
    <source>
        <strain>ATCC 204508 / S288c</strain>
    </source>
</reference>
<reference key="3">
    <citation type="submission" date="2005-06" db="UniProtKB">
        <authorList>
            <person name="Bienvenut W.V."/>
            <person name="Peters C."/>
        </authorList>
    </citation>
    <scope>PROTEIN SEQUENCE OF 2-32; 93-101 AND 193-200</scope>
    <scope>CLEAVAGE OF INITIATOR METHIONINE</scope>
    <scope>ACETYLATION AT SER-2</scope>
    <scope>IDENTIFICATION BY MASS SPECTROMETRY</scope>
</reference>
<reference key="4">
    <citation type="journal article" date="2003" name="Nature">
        <title>Global analysis of protein localization in budding yeast.</title>
        <authorList>
            <person name="Huh W.-K."/>
            <person name="Falvo J.V."/>
            <person name="Gerke L.C."/>
            <person name="Carroll A.S."/>
            <person name="Howson R.W."/>
            <person name="Weissman J.S."/>
            <person name="O'Shea E.K."/>
        </authorList>
    </citation>
    <scope>SUBCELLULAR LOCATION [LARGE SCALE ANALYSIS]</scope>
</reference>
<reference key="5">
    <citation type="journal article" date="2003" name="Nature">
        <title>Global analysis of protein expression in yeast.</title>
        <authorList>
            <person name="Ghaemmaghami S."/>
            <person name="Huh W.-K."/>
            <person name="Bower K."/>
            <person name="Howson R.W."/>
            <person name="Belle A."/>
            <person name="Dephoure N."/>
            <person name="O'Shea E.K."/>
            <person name="Weissman J.S."/>
        </authorList>
    </citation>
    <scope>LEVEL OF PROTEIN EXPRESSION [LARGE SCALE ANALYSIS]</scope>
</reference>
<reference key="6">
    <citation type="journal article" date="2012" name="Proc. Natl. Acad. Sci. U.S.A.">
        <title>N-terminal acetylome analyses and functional insights of the N-terminal acetyltransferase NatB.</title>
        <authorList>
            <person name="Van Damme P."/>
            <person name="Lasa M."/>
            <person name="Polevoda B."/>
            <person name="Gazquez C."/>
            <person name="Elosegui-Artola A."/>
            <person name="Kim D.S."/>
            <person name="De Juan-Pardo E."/>
            <person name="Demeyer K."/>
            <person name="Hole K."/>
            <person name="Larrea E."/>
            <person name="Timmerman E."/>
            <person name="Prieto J."/>
            <person name="Arnesen T."/>
            <person name="Sherman F."/>
            <person name="Gevaert K."/>
            <person name="Aldabe R."/>
        </authorList>
    </citation>
    <scope>ACETYLATION [LARGE SCALE ANALYSIS] AT SER-2</scope>
    <scope>CLEAVAGE OF INITIATOR METHIONINE [LARGE SCALE ANALYSIS]</scope>
    <scope>IDENTIFICATION BY MASS SPECTROMETRY [LARGE SCALE ANALYSIS]</scope>
</reference>